<dbReference type="EC" id="3.6.5.3" evidence="2"/>
<dbReference type="EMBL" id="U09442">
    <property type="protein sequence ID" value="AAA87700.1"/>
    <property type="molecule type" value="Genomic_DNA"/>
</dbReference>
<dbReference type="SMR" id="P50380"/>
<dbReference type="GO" id="GO:0009507">
    <property type="term" value="C:chloroplast"/>
    <property type="evidence" value="ECO:0007669"/>
    <property type="project" value="UniProtKB-SubCell"/>
</dbReference>
<dbReference type="GO" id="GO:0005739">
    <property type="term" value="C:mitochondrion"/>
    <property type="evidence" value="ECO:0007669"/>
    <property type="project" value="TreeGrafter"/>
</dbReference>
<dbReference type="GO" id="GO:0005525">
    <property type="term" value="F:GTP binding"/>
    <property type="evidence" value="ECO:0007669"/>
    <property type="project" value="UniProtKB-KW"/>
</dbReference>
<dbReference type="GO" id="GO:0003924">
    <property type="term" value="F:GTPase activity"/>
    <property type="evidence" value="ECO:0007669"/>
    <property type="project" value="InterPro"/>
</dbReference>
<dbReference type="GO" id="GO:0003746">
    <property type="term" value="F:translation elongation factor activity"/>
    <property type="evidence" value="ECO:0007669"/>
    <property type="project" value="UniProtKB-KW"/>
</dbReference>
<dbReference type="GO" id="GO:0070125">
    <property type="term" value="P:mitochondrial translational elongation"/>
    <property type="evidence" value="ECO:0007669"/>
    <property type="project" value="TreeGrafter"/>
</dbReference>
<dbReference type="CDD" id="cd03697">
    <property type="entry name" value="EFTU_II"/>
    <property type="match status" value="1"/>
</dbReference>
<dbReference type="FunFam" id="2.40.30.10:FF:000001">
    <property type="entry name" value="Elongation factor Tu"/>
    <property type="match status" value="1"/>
</dbReference>
<dbReference type="Gene3D" id="3.40.50.300">
    <property type="entry name" value="P-loop containing nucleotide triphosphate hydrolases"/>
    <property type="match status" value="1"/>
</dbReference>
<dbReference type="Gene3D" id="2.40.30.10">
    <property type="entry name" value="Translation factors"/>
    <property type="match status" value="1"/>
</dbReference>
<dbReference type="InterPro" id="IPR050055">
    <property type="entry name" value="EF-Tu_GTPase"/>
</dbReference>
<dbReference type="InterPro" id="IPR004161">
    <property type="entry name" value="EFTu-like_2"/>
</dbReference>
<dbReference type="InterPro" id="IPR033720">
    <property type="entry name" value="EFTU_2"/>
</dbReference>
<dbReference type="InterPro" id="IPR027417">
    <property type="entry name" value="P-loop_NTPase"/>
</dbReference>
<dbReference type="InterPro" id="IPR000795">
    <property type="entry name" value="T_Tr_GTP-bd_dom"/>
</dbReference>
<dbReference type="InterPro" id="IPR009000">
    <property type="entry name" value="Transl_B-barrel_sf"/>
</dbReference>
<dbReference type="PANTHER" id="PTHR43721:SF5">
    <property type="entry name" value="ELONGATION FACTOR TU, CHLOROPLASTIC"/>
    <property type="match status" value="1"/>
</dbReference>
<dbReference type="PANTHER" id="PTHR43721">
    <property type="entry name" value="ELONGATION FACTOR TU-RELATED"/>
    <property type="match status" value="1"/>
</dbReference>
<dbReference type="Pfam" id="PF00009">
    <property type="entry name" value="GTP_EFTU"/>
    <property type="match status" value="1"/>
</dbReference>
<dbReference type="Pfam" id="PF03144">
    <property type="entry name" value="GTP_EFTU_D2"/>
    <property type="match status" value="1"/>
</dbReference>
<dbReference type="PRINTS" id="PR00315">
    <property type="entry name" value="ELONGATNFCT"/>
</dbReference>
<dbReference type="SUPFAM" id="SSF52540">
    <property type="entry name" value="P-loop containing nucleoside triphosphate hydrolases"/>
    <property type="match status" value="1"/>
</dbReference>
<dbReference type="SUPFAM" id="SSF50447">
    <property type="entry name" value="Translation proteins"/>
    <property type="match status" value="1"/>
</dbReference>
<dbReference type="PROSITE" id="PS51722">
    <property type="entry name" value="G_TR_2"/>
    <property type="match status" value="1"/>
</dbReference>
<geneLocation type="chloroplast"/>
<evidence type="ECO:0000250" key="1"/>
<evidence type="ECO:0000255" key="2">
    <source>
        <dbReference type="HAMAP-Rule" id="MF_00118"/>
    </source>
</evidence>
<evidence type="ECO:0000255" key="3">
    <source>
        <dbReference type="PROSITE-ProRule" id="PRU01059"/>
    </source>
</evidence>
<accession>P50380</accession>
<sequence>KNMITGAAQMDGAILVVSGADGPMPQTKEHILLAKQVGVPHIVVFLNKQDQVDDDELLELVELEVRELLDKYEFPGDEIPVVPGTALLALEALIANPKTQRGENKWVDKIYELMDKVDSYIPTPERETDKPFLLAVEDVLSITGRGTVATGRVERGTLKISDNVEIVGLKPTQTAVVTGLEMFKTLDETIAGDNVGVLLRGVQKKDIERGMVIAKPGTITPHTKFEAQVYVLTK</sequence>
<organism>
    <name type="scientific">Pandorina morum</name>
    <name type="common">Freshwater green alga</name>
    <name type="synonym">Volvox morum</name>
    <dbReference type="NCBI Taxonomy" id="33099"/>
    <lineage>
        <taxon>Eukaryota</taxon>
        <taxon>Viridiplantae</taxon>
        <taxon>Chlorophyta</taxon>
        <taxon>core chlorophytes</taxon>
        <taxon>Chlorophyceae</taxon>
        <taxon>CS clade</taxon>
        <taxon>Chlamydomonadales</taxon>
        <taxon>Volvocaceae</taxon>
        <taxon>Pandorina</taxon>
    </lineage>
</organism>
<name>EFTU_PANMO</name>
<proteinExistence type="inferred from homology"/>
<keyword id="KW-0150">Chloroplast</keyword>
<keyword id="KW-0251">Elongation factor</keyword>
<keyword id="KW-0342">GTP-binding</keyword>
<keyword id="KW-0378">Hydrolase</keyword>
<keyword id="KW-0547">Nucleotide-binding</keyword>
<keyword id="KW-0934">Plastid</keyword>
<keyword id="KW-0648">Protein biosynthesis</keyword>
<protein>
    <recommendedName>
        <fullName>Elongation factor Tu, chloroplastic</fullName>
        <shortName>EF-Tu</shortName>
        <ecNumber evidence="2">3.6.5.3</ecNumber>
    </recommendedName>
</protein>
<reference key="1">
    <citation type="journal article" date="1995" name="Mol. Phylogenet. Evol.">
        <title>Phylogenetic analysis of tufA sequences indicates a cyanobacterial origin of all plastids.</title>
        <authorList>
            <person name="Delwiche C.F."/>
            <person name="Kuhsel M."/>
            <person name="Palmer J.D."/>
        </authorList>
    </citation>
    <scope>NUCLEOTIDE SEQUENCE [GENOMIC DNA]</scope>
</reference>
<comment type="function">
    <text evidence="2">GTP hydrolase that promotes the GTP-dependent binding of aminoacyl-tRNA to the A-site of ribosomes during protein biosynthesis.</text>
</comment>
<comment type="catalytic activity">
    <reaction evidence="2">
        <text>GTP + H2O = GDP + phosphate + H(+)</text>
        <dbReference type="Rhea" id="RHEA:19669"/>
        <dbReference type="ChEBI" id="CHEBI:15377"/>
        <dbReference type="ChEBI" id="CHEBI:15378"/>
        <dbReference type="ChEBI" id="CHEBI:37565"/>
        <dbReference type="ChEBI" id="CHEBI:43474"/>
        <dbReference type="ChEBI" id="CHEBI:58189"/>
        <dbReference type="EC" id="3.6.5.3"/>
    </reaction>
    <physiologicalReaction direction="left-to-right" evidence="2">
        <dbReference type="Rhea" id="RHEA:19670"/>
    </physiologicalReaction>
</comment>
<comment type="subcellular location">
    <subcellularLocation>
        <location>Plastid</location>
        <location>Chloroplast</location>
    </subcellularLocation>
</comment>
<comment type="similarity">
    <text evidence="3">Belongs to the TRAFAC class translation factor GTPase superfamily. Classic translation factor GTPase family. EF-Tu/EF-1A subfamily.</text>
</comment>
<gene>
    <name type="primary">tufA</name>
</gene>
<feature type="chain" id="PRO_0000091468" description="Elongation factor Tu, chloroplastic">
    <location>
        <begin position="1" status="less than"/>
        <end position="234" status="greater than"/>
    </location>
</feature>
<feature type="domain" description="tr-type G" evidence="3">
    <location>
        <begin position="1" status="less than"/>
        <end position="125"/>
    </location>
</feature>
<feature type="binding site" evidence="1">
    <location>
        <begin position="47"/>
        <end position="50"/>
    </location>
    <ligand>
        <name>GTP</name>
        <dbReference type="ChEBI" id="CHEBI:37565"/>
    </ligand>
</feature>
<feature type="non-terminal residue">
    <location>
        <position position="1"/>
    </location>
</feature>
<feature type="non-terminal residue">
    <location>
        <position position="234"/>
    </location>
</feature>